<keyword id="KW-0272">Extracellular matrix</keyword>
<keyword id="KW-0325">Glycoprotein</keyword>
<keyword id="KW-0433">Leucine-rich repeat</keyword>
<keyword id="KW-0654">Proteoglycan</keyword>
<keyword id="KW-1185">Reference proteome</keyword>
<keyword id="KW-0677">Repeat</keyword>
<keyword id="KW-0964">Secreted</keyword>
<keyword id="KW-0716">Sensory transduction</keyword>
<keyword id="KW-0732">Signal</keyword>
<keyword id="KW-0844">Vision</keyword>
<reference evidence="5" key="1">
    <citation type="journal article" date="2003" name="Invest. Ophthalmol. Vis. Sci.">
        <title>Identification of the gene and the mutation responsible for the mouse nob phenotype.</title>
        <authorList>
            <person name="Gregg R.G."/>
            <person name="Mukhopadhyay S."/>
            <person name="Candille S.I."/>
            <person name="Ball S.L."/>
            <person name="Pardue M.T."/>
            <person name="McCall M.A."/>
            <person name="Peachey N.S."/>
        </authorList>
    </citation>
    <scope>NUCLEOTIDE SEQUENCE [MRNA]</scope>
    <scope>TISSUE SPECIFICITY</scope>
    <scope>DISEASE</scope>
</reference>
<reference key="2">
    <citation type="journal article" date="2003" name="Invest. Ophthalmol. Vis. Sci.">
        <title>Isolation of the mouse nyctalopin gene Nyx and expression studies in mouse and rat retina.</title>
        <authorList>
            <person name="Pesch K."/>
            <person name="Zeitz C."/>
            <person name="Fries J.E."/>
            <person name="Muenscher S."/>
            <person name="Pusch C.M."/>
            <person name="Kohler K."/>
            <person name="Berger W."/>
            <person name="Wissinger B."/>
        </authorList>
    </citation>
    <scope>NUCLEOTIDE SEQUENCE [MRNA]</scope>
    <scope>TISSUE SPECIFICITY</scope>
    <scope>DEVELOPMENTAL STAGE</scope>
    <source>
        <strain>C57BL/6J</strain>
        <tissue>Eye</tissue>
    </source>
</reference>
<reference key="3">
    <citation type="journal article" date="2004" name="Genome Res.">
        <title>The status, quality, and expansion of the NIH full-length cDNA project: the Mammalian Gene Collection (MGC).</title>
        <authorList>
            <consortium name="The MGC Project Team"/>
        </authorList>
    </citation>
    <scope>NUCLEOTIDE SEQUENCE [LARGE SCALE MRNA]</scope>
    <source>
        <tissue>Eye</tissue>
        <tissue>Retina</tissue>
    </source>
</reference>
<reference key="4">
    <citation type="journal article" date="2005" name="Science">
        <title>The transcriptional landscape of the mammalian genome.</title>
        <authorList>
            <person name="Carninci P."/>
            <person name="Kasukawa T."/>
            <person name="Katayama S."/>
            <person name="Gough J."/>
            <person name="Frith M.C."/>
            <person name="Maeda N."/>
            <person name="Oyama R."/>
            <person name="Ravasi T."/>
            <person name="Lenhard B."/>
            <person name="Wells C."/>
            <person name="Kodzius R."/>
            <person name="Shimokawa K."/>
            <person name="Bajic V.B."/>
            <person name="Brenner S.E."/>
            <person name="Batalov S."/>
            <person name="Forrest A.R."/>
            <person name="Zavolan M."/>
            <person name="Davis M.J."/>
            <person name="Wilming L.G."/>
            <person name="Aidinis V."/>
            <person name="Allen J.E."/>
            <person name="Ambesi-Impiombato A."/>
            <person name="Apweiler R."/>
            <person name="Aturaliya R.N."/>
            <person name="Bailey T.L."/>
            <person name="Bansal M."/>
            <person name="Baxter L."/>
            <person name="Beisel K.W."/>
            <person name="Bersano T."/>
            <person name="Bono H."/>
            <person name="Chalk A.M."/>
            <person name="Chiu K.P."/>
            <person name="Choudhary V."/>
            <person name="Christoffels A."/>
            <person name="Clutterbuck D.R."/>
            <person name="Crowe M.L."/>
            <person name="Dalla E."/>
            <person name="Dalrymple B.P."/>
            <person name="de Bono B."/>
            <person name="Della Gatta G."/>
            <person name="di Bernardo D."/>
            <person name="Down T."/>
            <person name="Engstrom P."/>
            <person name="Fagiolini M."/>
            <person name="Faulkner G."/>
            <person name="Fletcher C.F."/>
            <person name="Fukushima T."/>
            <person name="Furuno M."/>
            <person name="Futaki S."/>
            <person name="Gariboldi M."/>
            <person name="Georgii-Hemming P."/>
            <person name="Gingeras T.R."/>
            <person name="Gojobori T."/>
            <person name="Green R.E."/>
            <person name="Gustincich S."/>
            <person name="Harbers M."/>
            <person name="Hayashi Y."/>
            <person name="Hensch T.K."/>
            <person name="Hirokawa N."/>
            <person name="Hill D."/>
            <person name="Huminiecki L."/>
            <person name="Iacono M."/>
            <person name="Ikeo K."/>
            <person name="Iwama A."/>
            <person name="Ishikawa T."/>
            <person name="Jakt M."/>
            <person name="Kanapin A."/>
            <person name="Katoh M."/>
            <person name="Kawasawa Y."/>
            <person name="Kelso J."/>
            <person name="Kitamura H."/>
            <person name="Kitano H."/>
            <person name="Kollias G."/>
            <person name="Krishnan S.P."/>
            <person name="Kruger A."/>
            <person name="Kummerfeld S.K."/>
            <person name="Kurochkin I.V."/>
            <person name="Lareau L.F."/>
            <person name="Lazarevic D."/>
            <person name="Lipovich L."/>
            <person name="Liu J."/>
            <person name="Liuni S."/>
            <person name="McWilliam S."/>
            <person name="Madan Babu M."/>
            <person name="Madera M."/>
            <person name="Marchionni L."/>
            <person name="Matsuda H."/>
            <person name="Matsuzawa S."/>
            <person name="Miki H."/>
            <person name="Mignone F."/>
            <person name="Miyake S."/>
            <person name="Morris K."/>
            <person name="Mottagui-Tabar S."/>
            <person name="Mulder N."/>
            <person name="Nakano N."/>
            <person name="Nakauchi H."/>
            <person name="Ng P."/>
            <person name="Nilsson R."/>
            <person name="Nishiguchi S."/>
            <person name="Nishikawa S."/>
            <person name="Nori F."/>
            <person name="Ohara O."/>
            <person name="Okazaki Y."/>
            <person name="Orlando V."/>
            <person name="Pang K.C."/>
            <person name="Pavan W.J."/>
            <person name="Pavesi G."/>
            <person name="Pesole G."/>
            <person name="Petrovsky N."/>
            <person name="Piazza S."/>
            <person name="Reed J."/>
            <person name="Reid J.F."/>
            <person name="Ring B.Z."/>
            <person name="Ringwald M."/>
            <person name="Rost B."/>
            <person name="Ruan Y."/>
            <person name="Salzberg S.L."/>
            <person name="Sandelin A."/>
            <person name="Schneider C."/>
            <person name="Schoenbach C."/>
            <person name="Sekiguchi K."/>
            <person name="Semple C.A."/>
            <person name="Seno S."/>
            <person name="Sessa L."/>
            <person name="Sheng Y."/>
            <person name="Shibata Y."/>
            <person name="Shimada H."/>
            <person name="Shimada K."/>
            <person name="Silva D."/>
            <person name="Sinclair B."/>
            <person name="Sperling S."/>
            <person name="Stupka E."/>
            <person name="Sugiura K."/>
            <person name="Sultana R."/>
            <person name="Takenaka Y."/>
            <person name="Taki K."/>
            <person name="Tammoja K."/>
            <person name="Tan S.L."/>
            <person name="Tang S."/>
            <person name="Taylor M.S."/>
            <person name="Tegner J."/>
            <person name="Teichmann S.A."/>
            <person name="Ueda H.R."/>
            <person name="van Nimwegen E."/>
            <person name="Verardo R."/>
            <person name="Wei C.L."/>
            <person name="Yagi K."/>
            <person name="Yamanishi H."/>
            <person name="Zabarovsky E."/>
            <person name="Zhu S."/>
            <person name="Zimmer A."/>
            <person name="Hide W."/>
            <person name="Bult C."/>
            <person name="Grimmond S.M."/>
            <person name="Teasdale R.D."/>
            <person name="Liu E.T."/>
            <person name="Brusic V."/>
            <person name="Quackenbush J."/>
            <person name="Wahlestedt C."/>
            <person name="Mattick J.S."/>
            <person name="Hume D.A."/>
            <person name="Kai C."/>
            <person name="Sasaki D."/>
            <person name="Tomaru Y."/>
            <person name="Fukuda S."/>
            <person name="Kanamori-Katayama M."/>
            <person name="Suzuki M."/>
            <person name="Aoki J."/>
            <person name="Arakawa T."/>
            <person name="Iida J."/>
            <person name="Imamura K."/>
            <person name="Itoh M."/>
            <person name="Kato T."/>
            <person name="Kawaji H."/>
            <person name="Kawagashira N."/>
            <person name="Kawashima T."/>
            <person name="Kojima M."/>
            <person name="Kondo S."/>
            <person name="Konno H."/>
            <person name="Nakano K."/>
            <person name="Ninomiya N."/>
            <person name="Nishio T."/>
            <person name="Okada M."/>
            <person name="Plessy C."/>
            <person name="Shibata K."/>
            <person name="Shiraki T."/>
            <person name="Suzuki S."/>
            <person name="Tagami M."/>
            <person name="Waki K."/>
            <person name="Watahiki A."/>
            <person name="Okamura-Oho Y."/>
            <person name="Suzuki H."/>
            <person name="Kawai J."/>
            <person name="Hayashizaki Y."/>
        </authorList>
    </citation>
    <scope>NUCLEOTIDE SEQUENCE [LARGE SCALE MRNA] OF 132-343</scope>
    <source>
        <strain>C57BL/6J</strain>
        <tissue>Hypothalamus</tissue>
    </source>
</reference>
<comment type="subcellular location">
    <subcellularLocation>
        <location evidence="1">Secreted</location>
        <location evidence="1">Extracellular space</location>
        <location evidence="1">Extracellular matrix</location>
    </subcellularLocation>
</comment>
<comment type="tissue specificity">
    <text evidence="3 4">Expressed abundantly in retina with lower levels in brain, lung, spleen and testis. Not detected in kidney, heart or liver. In the retina, highest expression found in the inner nuclear layer and ganglion cell layer.</text>
</comment>
<comment type="developmental stage">
    <text evidence="4">Expressed during all stages of postnatal retinal development.</text>
</comment>
<comment type="disease">
    <text evidence="3">Defects in Nyx are the cause of the nob (no b-wave) phenotype which is characterized by a decreased sensitivity to light and an absence of the rod b-wave in electroretinograms. An 85-bp deletion in exon 3 results in the loss of 288 residues from the C-terminus of the protein.</text>
</comment>
<comment type="similarity">
    <text evidence="5">Belongs to the small leucine-rich proteoglycan (SLRP) family. SLRP class IV subfamily.</text>
</comment>
<dbReference type="EMBL" id="AY114303">
    <property type="protein sequence ID" value="AAM47034.1"/>
    <property type="molecule type" value="mRNA"/>
</dbReference>
<dbReference type="EMBL" id="BC035244">
    <property type="protein sequence ID" value="AAH35244.1"/>
    <property type="molecule type" value="mRNA"/>
</dbReference>
<dbReference type="EMBL" id="BC048381">
    <property type="protein sequence ID" value="AAH48381.1"/>
    <property type="molecule type" value="mRNA"/>
</dbReference>
<dbReference type="EMBL" id="AK038912">
    <property type="protein sequence ID" value="BAC30165.1"/>
    <property type="molecule type" value="mRNA"/>
</dbReference>
<dbReference type="CCDS" id="CCDS40877.1"/>
<dbReference type="RefSeq" id="NP_775591.1">
    <property type="nucleotide sequence ID" value="NM_173415.5"/>
</dbReference>
<dbReference type="RefSeq" id="XP_006527675.1">
    <property type="nucleotide sequence ID" value="XM_006527612.3"/>
</dbReference>
<dbReference type="RefSeq" id="XP_006527676.1">
    <property type="nucleotide sequence ID" value="XM_006527613.5"/>
</dbReference>
<dbReference type="RefSeq" id="XP_006527677.1">
    <property type="nucleotide sequence ID" value="XM_006527614.5"/>
</dbReference>
<dbReference type="RefSeq" id="XP_030107174.1">
    <property type="nucleotide sequence ID" value="XM_030251314.2"/>
</dbReference>
<dbReference type="SMR" id="P83503"/>
<dbReference type="FunCoup" id="P83503">
    <property type="interactions" value="161"/>
</dbReference>
<dbReference type="STRING" id="10090.ENSMUSP00000056313"/>
<dbReference type="GlyCosmos" id="P83503">
    <property type="glycosylation" value="7 sites, No reported glycans"/>
</dbReference>
<dbReference type="GlyGen" id="P83503">
    <property type="glycosylation" value="7 sites"/>
</dbReference>
<dbReference type="iPTMnet" id="P83503"/>
<dbReference type="PhosphoSitePlus" id="P83503"/>
<dbReference type="PaxDb" id="10090-ENSMUSP00000056313"/>
<dbReference type="Antibodypedia" id="55948">
    <property type="antibodies" value="93 antibodies from 16 providers"/>
</dbReference>
<dbReference type="Ensembl" id="ENSMUST00000050434.6">
    <property type="protein sequence ID" value="ENSMUSP00000056313.6"/>
    <property type="gene ID" value="ENSMUSG00000051228.6"/>
</dbReference>
<dbReference type="GeneID" id="236690"/>
<dbReference type="KEGG" id="mmu:236690"/>
<dbReference type="UCSC" id="uc009srn.1">
    <property type="organism name" value="mouse"/>
</dbReference>
<dbReference type="AGR" id="MGI:2448607"/>
<dbReference type="CTD" id="60506"/>
<dbReference type="MGI" id="MGI:2448607">
    <property type="gene designation" value="Nyx"/>
</dbReference>
<dbReference type="VEuPathDB" id="HostDB:ENSMUSG00000051228"/>
<dbReference type="eggNOG" id="KOG4237">
    <property type="taxonomic scope" value="Eukaryota"/>
</dbReference>
<dbReference type="GeneTree" id="ENSGT00940000160782"/>
<dbReference type="HOGENOM" id="CLU_000288_18_6_1"/>
<dbReference type="InParanoid" id="P83503"/>
<dbReference type="OMA" id="DCQKMEY"/>
<dbReference type="OrthoDB" id="2015831at2759"/>
<dbReference type="PhylomeDB" id="P83503"/>
<dbReference type="TreeFam" id="TF337463"/>
<dbReference type="BioGRID-ORCS" id="236690">
    <property type="hits" value="2 hits in 77 CRISPR screens"/>
</dbReference>
<dbReference type="PRO" id="PR:P83503"/>
<dbReference type="Proteomes" id="UP000000589">
    <property type="component" value="Chromosome X"/>
</dbReference>
<dbReference type="RNAct" id="P83503">
    <property type="molecule type" value="protein"/>
</dbReference>
<dbReference type="Bgee" id="ENSMUSG00000051228">
    <property type="expression patterns" value="Expressed in retinal neural layer and 34 other cell types or tissues"/>
</dbReference>
<dbReference type="GO" id="GO:0005576">
    <property type="term" value="C:extracellular region"/>
    <property type="evidence" value="ECO:0007669"/>
    <property type="project" value="UniProtKB-KW"/>
</dbReference>
<dbReference type="GO" id="GO:0007601">
    <property type="term" value="P:visual perception"/>
    <property type="evidence" value="ECO:0000315"/>
    <property type="project" value="MGI"/>
</dbReference>
<dbReference type="FunFam" id="3.80.10.10:FF:000172">
    <property type="entry name" value="Nyctalopin"/>
    <property type="match status" value="1"/>
</dbReference>
<dbReference type="FunFam" id="3.80.10.10:FF:000258">
    <property type="entry name" value="Nyctalopin"/>
    <property type="match status" value="1"/>
</dbReference>
<dbReference type="Gene3D" id="3.80.10.10">
    <property type="entry name" value="Ribonuclease Inhibitor"/>
    <property type="match status" value="2"/>
</dbReference>
<dbReference type="InterPro" id="IPR000483">
    <property type="entry name" value="Cys-rich_flank_reg_C"/>
</dbReference>
<dbReference type="InterPro" id="IPR001611">
    <property type="entry name" value="Leu-rich_rpt"/>
</dbReference>
<dbReference type="InterPro" id="IPR003591">
    <property type="entry name" value="Leu-rich_rpt_typical-subtyp"/>
</dbReference>
<dbReference type="InterPro" id="IPR032675">
    <property type="entry name" value="LRR_dom_sf"/>
</dbReference>
<dbReference type="InterPro" id="IPR050541">
    <property type="entry name" value="LRR_TM_domain-containing"/>
</dbReference>
<dbReference type="InterPro" id="IPR000372">
    <property type="entry name" value="LRRNT"/>
</dbReference>
<dbReference type="PANTHER" id="PTHR24369">
    <property type="entry name" value="ANTIGEN BSP, PUTATIVE-RELATED"/>
    <property type="match status" value="1"/>
</dbReference>
<dbReference type="PANTHER" id="PTHR24369:SF210">
    <property type="entry name" value="CHAOPTIN-RELATED"/>
    <property type="match status" value="1"/>
</dbReference>
<dbReference type="Pfam" id="PF13855">
    <property type="entry name" value="LRR_8"/>
    <property type="match status" value="3"/>
</dbReference>
<dbReference type="Pfam" id="PF01462">
    <property type="entry name" value="LRRNT"/>
    <property type="match status" value="1"/>
</dbReference>
<dbReference type="SMART" id="SM00369">
    <property type="entry name" value="LRR_TYP"/>
    <property type="match status" value="9"/>
</dbReference>
<dbReference type="SMART" id="SM00082">
    <property type="entry name" value="LRRCT"/>
    <property type="match status" value="1"/>
</dbReference>
<dbReference type="SMART" id="SM00013">
    <property type="entry name" value="LRRNT"/>
    <property type="match status" value="1"/>
</dbReference>
<dbReference type="SUPFAM" id="SSF52058">
    <property type="entry name" value="L domain-like"/>
    <property type="match status" value="1"/>
</dbReference>
<organism evidence="6">
    <name type="scientific">Mus musculus</name>
    <name type="common">Mouse</name>
    <dbReference type="NCBI Taxonomy" id="10090"/>
    <lineage>
        <taxon>Eukaryota</taxon>
        <taxon>Metazoa</taxon>
        <taxon>Chordata</taxon>
        <taxon>Craniata</taxon>
        <taxon>Vertebrata</taxon>
        <taxon>Euteleostomi</taxon>
        <taxon>Mammalia</taxon>
        <taxon>Eutheria</taxon>
        <taxon>Euarchontoglires</taxon>
        <taxon>Glires</taxon>
        <taxon>Rodentia</taxon>
        <taxon>Myomorpha</taxon>
        <taxon>Muroidea</taxon>
        <taxon>Muridae</taxon>
        <taxon>Murinae</taxon>
        <taxon>Mus</taxon>
        <taxon>Mus</taxon>
    </lineage>
</organism>
<proteinExistence type="evidence at transcript level"/>
<name>NYX_MOUSE</name>
<protein>
    <recommendedName>
        <fullName>Nyctalopin</fullName>
    </recommendedName>
</protein>
<feature type="signal peptide" evidence="2">
    <location>
        <begin position="1"/>
        <end position="18"/>
    </location>
</feature>
<feature type="chain" id="PRO_0000032777" description="Nyctalopin">
    <location>
        <begin position="19"/>
        <end position="476"/>
    </location>
</feature>
<feature type="domain" description="LRRNT">
    <location>
        <begin position="19"/>
        <end position="57"/>
    </location>
</feature>
<feature type="repeat" description="LRR 1">
    <location>
        <begin position="58"/>
        <end position="79"/>
    </location>
</feature>
<feature type="repeat" description="LRR 2">
    <location>
        <begin position="82"/>
        <end position="103"/>
    </location>
</feature>
<feature type="repeat" description="LRR 3">
    <location>
        <begin position="106"/>
        <end position="128"/>
    </location>
</feature>
<feature type="repeat" description="LRR 4">
    <location>
        <begin position="131"/>
        <end position="154"/>
    </location>
</feature>
<feature type="repeat" description="LRR 5">
    <location>
        <begin position="155"/>
        <end position="177"/>
    </location>
</feature>
<feature type="repeat" description="LRR 6">
    <location>
        <begin position="178"/>
        <end position="199"/>
    </location>
</feature>
<feature type="repeat" description="LRR 7">
    <location>
        <begin position="202"/>
        <end position="223"/>
    </location>
</feature>
<feature type="repeat" description="LRR 8">
    <location>
        <begin position="226"/>
        <end position="247"/>
    </location>
</feature>
<feature type="repeat" description="LRR 9">
    <location>
        <begin position="250"/>
        <end position="271"/>
    </location>
</feature>
<feature type="repeat" description="LRR 10">
    <location>
        <begin position="274"/>
        <end position="295"/>
    </location>
</feature>
<feature type="repeat" description="LRR 11">
    <location>
        <begin position="298"/>
        <end position="319"/>
    </location>
</feature>
<feature type="domain" description="LRRCT">
    <location>
        <begin position="331"/>
        <end position="383"/>
    </location>
</feature>
<feature type="glycosylation site" description="N-linked (GlcNAc...) asparagine" evidence="2">
    <location>
        <position position="92"/>
    </location>
</feature>
<feature type="glycosylation site" description="N-linked (GlcNAc...) asparagine" evidence="2">
    <location>
        <position position="178"/>
    </location>
</feature>
<feature type="glycosylation site" description="N-linked (GlcNAc...) asparagine" evidence="2">
    <location>
        <position position="295"/>
    </location>
</feature>
<feature type="glycosylation site" description="N-linked (GlcNAc...) asparagine" evidence="2">
    <location>
        <position position="388"/>
    </location>
</feature>
<feature type="glycosylation site" description="N-linked (GlcNAc...) asparagine" evidence="2">
    <location>
        <position position="427"/>
    </location>
</feature>
<feature type="glycosylation site" description="N-linked (GlcNAc...) asparagine" evidence="2">
    <location>
        <position position="434"/>
    </location>
</feature>
<feature type="glycosylation site" description="N-linked (GlcNAc...) asparagine" evidence="2">
    <location>
        <position position="438"/>
    </location>
</feature>
<gene>
    <name type="primary">Nyx</name>
</gene>
<accession>P83503</accession>
<accession>Q8BYN4</accession>
<evidence type="ECO:0000250" key="1"/>
<evidence type="ECO:0000255" key="2"/>
<evidence type="ECO:0000269" key="3">
    <source>
    </source>
</evidence>
<evidence type="ECO:0000269" key="4">
    <source>
    </source>
</evidence>
<evidence type="ECO:0000305" key="5"/>
<evidence type="ECO:0000312" key="6">
    <source>
        <dbReference type="EMBL" id="AAH35244.1"/>
    </source>
</evidence>
<sequence>MLILLLHAVVFSLPYTRATEACLRACPAACTCSHVERGCSVRCDRAGLQRVPQEFPCEAASIDLDRNGLRILGERAFGTLPSLRRLSLRHNNLSFITPGAFKGLPRLAELRLAHNGELRYLHVRTFAALGRLRRLDLAACRLFSVPERLLAELPALRELTAFDNLFRRVPGALRGLANLTHAHFERSRIEAVASGSLLGMRRLRSLSLQANRVRAVHAGAFGDCGALEDLLLNDNLLATLPAAAFRGLRRLRTLNLGGNALGSVARAWFSDLAELELLYLDRNSITFVEEGAFQNLSGLLALHLNGNRLTVLSWAAFQPGFFLGRLFLFRNPWRCDCQLEWLRDWMEGSGRVADVACASPGSVAGQDLSQVVFERSSDGLCVDPDELNFTTSSPGPSPEPVATTVSRFSSLLSKLLAPRAPVEEVANTTWELVNVSLNDSFRSHAVMVFCYKATFLFTSCVLLSLAQYVVVGLQRE</sequence>